<sequence length="463" mass="49913">MAQVSINSDYSEWASSTDAGERARLLQSPCVDVVPKSEGEASPGDPDSGTTSTLGAVFIVVNACLGAGLLNFPAAFSTAGGVAAGIALQMGMLVFIISGLVILAYCSQASNERTYQEVVWAVCGKLTGVLCEVAIAVYTFGTCIAFLIIIGDQQDKIIAVMSKEPDGASGSPWYTDRKFTISLTAFLFILPLSIPKEIGFQKYASFLSVVGTWYVTAIIIIKYIWPDKEMRPGDILTRPASWMAVFNAMPTICFGFQCHVSSVPVFNSMRQPEVKTWGGVVTAAMVIALAVYMGTGICGFLTFGAAVDPDVLRSYPSEDVAVAVARAFIILSVLTSYPILHFCGRAVVEGLWLRYKGMPVEEDVGRERRRRVLQTLVWFLLTLLLALFIPDIGKVISVIGGLAACFIFIFPGLCLIQAKLSEMEEVKPASWWALVSYGVLLVTLGAFIFGQTTANAIFVDLLA</sequence>
<comment type="function">
    <text evidence="1 3 4">Symporter that selectively cotransports sodium ions and amino acids, such as L-glutamine and L-asparagine from the lysosome into the cytoplasm and may participates in mTORC1 activation (PubMed:21511949, PubMed:28416685). The transport activity requires an acidic lysosomal lumen (By similarity).</text>
</comment>
<comment type="catalytic activity">
    <reaction evidence="3 4">
        <text>L-glutamine(in) + Na(+)(in) = L-glutamine(out) + Na(+)(out)</text>
        <dbReference type="Rhea" id="RHEA:68236"/>
        <dbReference type="ChEBI" id="CHEBI:29101"/>
        <dbReference type="ChEBI" id="CHEBI:58359"/>
    </reaction>
</comment>
<comment type="catalytic activity">
    <reaction evidence="1">
        <text>L-asparagine(in) + Na(+)(in) = L-asparagine(out) + Na(+)(out)</text>
        <dbReference type="Rhea" id="RHEA:71383"/>
        <dbReference type="ChEBI" id="CHEBI:29101"/>
        <dbReference type="ChEBI" id="CHEBI:58048"/>
    </reaction>
</comment>
<comment type="subunit">
    <text evidence="1">Interacts with the mTORC1 complex; this interaction mediates the recruitment of mTORC1 to the lysosome and its subsequent activation.</text>
</comment>
<comment type="subcellular location">
    <subcellularLocation>
        <location evidence="1">Lysosome membrane</location>
        <topology evidence="2">Multi-pass membrane protein</topology>
    </subcellularLocation>
    <subcellularLocation>
        <location evidence="3">Cell projection</location>
        <location evidence="3">Axon</location>
    </subcellularLocation>
    <text evidence="3">In neurons, located in soma.</text>
</comment>
<comment type="tissue specificity">
    <text evidence="3">Highly expressed in the brain, including the hippocampus, especially in the granular layer of dentate gyrus cells and the pyramidal cell layer of the hippocampus, amygdala, thalamus, hypothalamus, in the layer of Purkinje cells in the cerebellum and the layers of cortex (PubMed:21511949). Particularly strong expression in neurons of the ventromedial hypothalamus, basolateral amygdala, ventral tegmental area, and locus coeruleus (PubMed:21511949). Not detected in glial cells, including astrocytes (PubMed:21511949). In addition to brain, also expressed in the spinal cord (at protein level) (PubMed:21511949).</text>
</comment>
<comment type="similarity">
    <text evidence="5">Belongs to the amino acid/polyamine transporter 2 family.</text>
</comment>
<feature type="chain" id="PRO_0000319598" description="Sodium-coupled neutral amino acid transporter 7">
    <location>
        <begin position="1"/>
        <end position="463"/>
    </location>
</feature>
<feature type="transmembrane region" description="Helical" evidence="2">
    <location>
        <begin position="56"/>
        <end position="76"/>
    </location>
</feature>
<feature type="transmembrane region" description="Helical" evidence="2">
    <location>
        <begin position="82"/>
        <end position="102"/>
    </location>
</feature>
<feature type="transmembrane region" description="Helical" evidence="2">
    <location>
        <begin position="130"/>
        <end position="150"/>
    </location>
</feature>
<feature type="transmembrane region" description="Helical" evidence="2">
    <location>
        <begin position="179"/>
        <end position="199"/>
    </location>
</feature>
<feature type="transmembrane region" description="Helical" evidence="2">
    <location>
        <begin position="206"/>
        <end position="226"/>
    </location>
</feature>
<feature type="transmembrane region" description="Helical" evidence="2">
    <location>
        <begin position="240"/>
        <end position="260"/>
    </location>
</feature>
<feature type="transmembrane region" description="Helical" evidence="2">
    <location>
        <begin position="283"/>
        <end position="303"/>
    </location>
</feature>
<feature type="transmembrane region" description="Helical" evidence="2">
    <location>
        <begin position="320"/>
        <end position="340"/>
    </location>
</feature>
<feature type="transmembrane region" description="Helical" evidence="2">
    <location>
        <begin position="372"/>
        <end position="392"/>
    </location>
</feature>
<feature type="transmembrane region" description="Helical" evidence="2">
    <location>
        <begin position="396"/>
        <end position="416"/>
    </location>
</feature>
<feature type="transmembrane region" description="Helical" evidence="2">
    <location>
        <begin position="429"/>
        <end position="449"/>
    </location>
</feature>
<feature type="modified residue" description="Phosphoserine" evidence="1">
    <location>
        <position position="28"/>
    </location>
</feature>
<feature type="sequence conflict" description="In Ref. 2; AAH31853." evidence="5" ref="2">
    <original>S</original>
    <variation>SG</variation>
    <location>
        <position position="11"/>
    </location>
</feature>
<feature type="sequence conflict" description="In Ref. 1; BAE42270." evidence="5" ref="1">
    <original>C</original>
    <variation>R</variation>
    <location>
        <position position="30"/>
    </location>
</feature>
<feature type="sequence conflict" description="In Ref. 2; AAH31853." evidence="5" ref="2">
    <original>A</original>
    <variation>V</variation>
    <location>
        <position position="159"/>
    </location>
</feature>
<dbReference type="EMBL" id="AK052548">
    <property type="protein sequence ID" value="BAC35035.1"/>
    <property type="molecule type" value="mRNA"/>
</dbReference>
<dbReference type="EMBL" id="AK171137">
    <property type="protein sequence ID" value="BAE42270.1"/>
    <property type="molecule type" value="mRNA"/>
</dbReference>
<dbReference type="EMBL" id="BC031853">
    <property type="protein sequence ID" value="AAH31853.1"/>
    <property type="molecule type" value="mRNA"/>
</dbReference>
<dbReference type="CCDS" id="CCDS22567.1"/>
<dbReference type="RefSeq" id="NP_001413632.1">
    <property type="nucleotide sequence ID" value="NM_001426703.1"/>
</dbReference>
<dbReference type="RefSeq" id="NP_001413633.1">
    <property type="nucleotide sequence ID" value="NM_001426704.1"/>
</dbReference>
<dbReference type="RefSeq" id="NP_766346.1">
    <property type="nucleotide sequence ID" value="NM_172758.5"/>
</dbReference>
<dbReference type="RefSeq" id="XP_006530939.1">
    <property type="nucleotide sequence ID" value="XM_006530876.3"/>
</dbReference>
<dbReference type="RefSeq" id="XP_006530940.1">
    <property type="nucleotide sequence ID" value="XM_006530877.2"/>
</dbReference>
<dbReference type="SMR" id="Q8BWH0"/>
<dbReference type="FunCoup" id="Q8BWH0">
    <property type="interactions" value="54"/>
</dbReference>
<dbReference type="STRING" id="10090.ENSMUSP00000037023"/>
<dbReference type="iPTMnet" id="Q8BWH0"/>
<dbReference type="PhosphoSitePlus" id="Q8BWH0"/>
<dbReference type="PaxDb" id="10090-ENSMUSP00000037023"/>
<dbReference type="PeptideAtlas" id="Q8BWH0"/>
<dbReference type="ProteomicsDB" id="256892"/>
<dbReference type="Pumba" id="Q8BWH0"/>
<dbReference type="Antibodypedia" id="48949">
    <property type="antibodies" value="36 antibodies from 11 providers"/>
</dbReference>
<dbReference type="DNASU" id="234595"/>
<dbReference type="Ensembl" id="ENSMUST00000040481.4">
    <property type="protein sequence ID" value="ENSMUSP00000037023.4"/>
    <property type="gene ID" value="ENSMUSG00000036534.7"/>
</dbReference>
<dbReference type="Ensembl" id="ENSMUST00000212270.2">
    <property type="protein sequence ID" value="ENSMUSP00000148659.2"/>
    <property type="gene ID" value="ENSMUSG00000036534.7"/>
</dbReference>
<dbReference type="GeneID" id="234595"/>
<dbReference type="KEGG" id="mmu:234595"/>
<dbReference type="UCSC" id="uc009mzg.1">
    <property type="organism name" value="mouse"/>
</dbReference>
<dbReference type="AGR" id="MGI:2679005"/>
<dbReference type="CTD" id="55238"/>
<dbReference type="MGI" id="MGI:2679005">
    <property type="gene designation" value="Slc38a7"/>
</dbReference>
<dbReference type="VEuPathDB" id="HostDB:ENSMUSG00000036534"/>
<dbReference type="eggNOG" id="KOG1305">
    <property type="taxonomic scope" value="Eukaryota"/>
</dbReference>
<dbReference type="GeneTree" id="ENSGT00940000158136"/>
<dbReference type="HOGENOM" id="CLU_038973_0_0_1"/>
<dbReference type="InParanoid" id="Q8BWH0"/>
<dbReference type="OMA" id="FAFTGHQ"/>
<dbReference type="OrthoDB" id="438545at2759"/>
<dbReference type="PhylomeDB" id="Q8BWH0"/>
<dbReference type="TreeFam" id="TF328787"/>
<dbReference type="BioGRID-ORCS" id="234595">
    <property type="hits" value="2 hits in 79 CRISPR screens"/>
</dbReference>
<dbReference type="ChiTaRS" id="Slc38a7">
    <property type="organism name" value="mouse"/>
</dbReference>
<dbReference type="PRO" id="PR:Q8BWH0"/>
<dbReference type="Proteomes" id="UP000000589">
    <property type="component" value="Chromosome 8"/>
</dbReference>
<dbReference type="RNAct" id="Q8BWH0">
    <property type="molecule type" value="protein"/>
</dbReference>
<dbReference type="Bgee" id="ENSMUSG00000036534">
    <property type="expression patterns" value="Expressed in chest bone and 249 other cell types or tissues"/>
</dbReference>
<dbReference type="ExpressionAtlas" id="Q8BWH0">
    <property type="expression patterns" value="baseline and differential"/>
</dbReference>
<dbReference type="GO" id="GO:0030424">
    <property type="term" value="C:axon"/>
    <property type="evidence" value="ECO:0000314"/>
    <property type="project" value="UniProtKB"/>
</dbReference>
<dbReference type="GO" id="GO:0005765">
    <property type="term" value="C:lysosomal membrane"/>
    <property type="evidence" value="ECO:0000250"/>
    <property type="project" value="UniProtKB"/>
</dbReference>
<dbReference type="GO" id="GO:0043025">
    <property type="term" value="C:neuronal cell body"/>
    <property type="evidence" value="ECO:0000314"/>
    <property type="project" value="UniProtKB"/>
</dbReference>
<dbReference type="GO" id="GO:0140901">
    <property type="term" value="F:L-asparagine:sodium symporter activity"/>
    <property type="evidence" value="ECO:0000250"/>
    <property type="project" value="UniProtKB"/>
</dbReference>
<dbReference type="GO" id="GO:0140902">
    <property type="term" value="F:L-glutamine:sodium symporter activity"/>
    <property type="evidence" value="ECO:0000314"/>
    <property type="project" value="UniProtKB"/>
</dbReference>
<dbReference type="GO" id="GO:0006867">
    <property type="term" value="P:asparagine transport"/>
    <property type="evidence" value="ECO:0000250"/>
    <property type="project" value="UniProtKB"/>
</dbReference>
<dbReference type="GO" id="GO:0006868">
    <property type="term" value="P:glutamine transport"/>
    <property type="evidence" value="ECO:0000314"/>
    <property type="project" value="UniProtKB"/>
</dbReference>
<dbReference type="GO" id="GO:0006814">
    <property type="term" value="P:sodium ion transport"/>
    <property type="evidence" value="ECO:0000314"/>
    <property type="project" value="UniProtKB"/>
</dbReference>
<dbReference type="FunFam" id="1.20.1740.10:FF:000038">
    <property type="entry name" value="Putative sodium-coupled neutral amino acid transporter 7"/>
    <property type="match status" value="1"/>
</dbReference>
<dbReference type="Gene3D" id="1.20.1740.10">
    <property type="entry name" value="Amino acid/polyamine transporter I"/>
    <property type="match status" value="1"/>
</dbReference>
<dbReference type="InterPro" id="IPR013057">
    <property type="entry name" value="AA_transpt_TM"/>
</dbReference>
<dbReference type="PANTHER" id="PTHR22950">
    <property type="entry name" value="AMINO ACID TRANSPORTER"/>
    <property type="match status" value="1"/>
</dbReference>
<dbReference type="PANTHER" id="PTHR22950:SF192">
    <property type="entry name" value="SODIUM-COUPLED NEUTRAL AMINO ACID TRANSPORTER 7"/>
    <property type="match status" value="1"/>
</dbReference>
<dbReference type="Pfam" id="PF01490">
    <property type="entry name" value="Aa_trans"/>
    <property type="match status" value="1"/>
</dbReference>
<accession>Q8BWH0</accession>
<accession>Q3TBN9</accession>
<accession>Q8K2B1</accession>
<reference key="1">
    <citation type="journal article" date="2005" name="Science">
        <title>The transcriptional landscape of the mammalian genome.</title>
        <authorList>
            <person name="Carninci P."/>
            <person name="Kasukawa T."/>
            <person name="Katayama S."/>
            <person name="Gough J."/>
            <person name="Frith M.C."/>
            <person name="Maeda N."/>
            <person name="Oyama R."/>
            <person name="Ravasi T."/>
            <person name="Lenhard B."/>
            <person name="Wells C."/>
            <person name="Kodzius R."/>
            <person name="Shimokawa K."/>
            <person name="Bajic V.B."/>
            <person name="Brenner S.E."/>
            <person name="Batalov S."/>
            <person name="Forrest A.R."/>
            <person name="Zavolan M."/>
            <person name="Davis M.J."/>
            <person name="Wilming L.G."/>
            <person name="Aidinis V."/>
            <person name="Allen J.E."/>
            <person name="Ambesi-Impiombato A."/>
            <person name="Apweiler R."/>
            <person name="Aturaliya R.N."/>
            <person name="Bailey T.L."/>
            <person name="Bansal M."/>
            <person name="Baxter L."/>
            <person name="Beisel K.W."/>
            <person name="Bersano T."/>
            <person name="Bono H."/>
            <person name="Chalk A.M."/>
            <person name="Chiu K.P."/>
            <person name="Choudhary V."/>
            <person name="Christoffels A."/>
            <person name="Clutterbuck D.R."/>
            <person name="Crowe M.L."/>
            <person name="Dalla E."/>
            <person name="Dalrymple B.P."/>
            <person name="de Bono B."/>
            <person name="Della Gatta G."/>
            <person name="di Bernardo D."/>
            <person name="Down T."/>
            <person name="Engstrom P."/>
            <person name="Fagiolini M."/>
            <person name="Faulkner G."/>
            <person name="Fletcher C.F."/>
            <person name="Fukushima T."/>
            <person name="Furuno M."/>
            <person name="Futaki S."/>
            <person name="Gariboldi M."/>
            <person name="Georgii-Hemming P."/>
            <person name="Gingeras T.R."/>
            <person name="Gojobori T."/>
            <person name="Green R.E."/>
            <person name="Gustincich S."/>
            <person name="Harbers M."/>
            <person name="Hayashi Y."/>
            <person name="Hensch T.K."/>
            <person name="Hirokawa N."/>
            <person name="Hill D."/>
            <person name="Huminiecki L."/>
            <person name="Iacono M."/>
            <person name="Ikeo K."/>
            <person name="Iwama A."/>
            <person name="Ishikawa T."/>
            <person name="Jakt M."/>
            <person name="Kanapin A."/>
            <person name="Katoh M."/>
            <person name="Kawasawa Y."/>
            <person name="Kelso J."/>
            <person name="Kitamura H."/>
            <person name="Kitano H."/>
            <person name="Kollias G."/>
            <person name="Krishnan S.P."/>
            <person name="Kruger A."/>
            <person name="Kummerfeld S.K."/>
            <person name="Kurochkin I.V."/>
            <person name="Lareau L.F."/>
            <person name="Lazarevic D."/>
            <person name="Lipovich L."/>
            <person name="Liu J."/>
            <person name="Liuni S."/>
            <person name="McWilliam S."/>
            <person name="Madan Babu M."/>
            <person name="Madera M."/>
            <person name="Marchionni L."/>
            <person name="Matsuda H."/>
            <person name="Matsuzawa S."/>
            <person name="Miki H."/>
            <person name="Mignone F."/>
            <person name="Miyake S."/>
            <person name="Morris K."/>
            <person name="Mottagui-Tabar S."/>
            <person name="Mulder N."/>
            <person name="Nakano N."/>
            <person name="Nakauchi H."/>
            <person name="Ng P."/>
            <person name="Nilsson R."/>
            <person name="Nishiguchi S."/>
            <person name="Nishikawa S."/>
            <person name="Nori F."/>
            <person name="Ohara O."/>
            <person name="Okazaki Y."/>
            <person name="Orlando V."/>
            <person name="Pang K.C."/>
            <person name="Pavan W.J."/>
            <person name="Pavesi G."/>
            <person name="Pesole G."/>
            <person name="Petrovsky N."/>
            <person name="Piazza S."/>
            <person name="Reed J."/>
            <person name="Reid J.F."/>
            <person name="Ring B.Z."/>
            <person name="Ringwald M."/>
            <person name="Rost B."/>
            <person name="Ruan Y."/>
            <person name="Salzberg S.L."/>
            <person name="Sandelin A."/>
            <person name="Schneider C."/>
            <person name="Schoenbach C."/>
            <person name="Sekiguchi K."/>
            <person name="Semple C.A."/>
            <person name="Seno S."/>
            <person name="Sessa L."/>
            <person name="Sheng Y."/>
            <person name="Shibata Y."/>
            <person name="Shimada H."/>
            <person name="Shimada K."/>
            <person name="Silva D."/>
            <person name="Sinclair B."/>
            <person name="Sperling S."/>
            <person name="Stupka E."/>
            <person name="Sugiura K."/>
            <person name="Sultana R."/>
            <person name="Takenaka Y."/>
            <person name="Taki K."/>
            <person name="Tammoja K."/>
            <person name="Tan S.L."/>
            <person name="Tang S."/>
            <person name="Taylor M.S."/>
            <person name="Tegner J."/>
            <person name="Teichmann S.A."/>
            <person name="Ueda H.R."/>
            <person name="van Nimwegen E."/>
            <person name="Verardo R."/>
            <person name="Wei C.L."/>
            <person name="Yagi K."/>
            <person name="Yamanishi H."/>
            <person name="Zabarovsky E."/>
            <person name="Zhu S."/>
            <person name="Zimmer A."/>
            <person name="Hide W."/>
            <person name="Bult C."/>
            <person name="Grimmond S.M."/>
            <person name="Teasdale R.D."/>
            <person name="Liu E.T."/>
            <person name="Brusic V."/>
            <person name="Quackenbush J."/>
            <person name="Wahlestedt C."/>
            <person name="Mattick J.S."/>
            <person name="Hume D.A."/>
            <person name="Kai C."/>
            <person name="Sasaki D."/>
            <person name="Tomaru Y."/>
            <person name="Fukuda S."/>
            <person name="Kanamori-Katayama M."/>
            <person name="Suzuki M."/>
            <person name="Aoki J."/>
            <person name="Arakawa T."/>
            <person name="Iida J."/>
            <person name="Imamura K."/>
            <person name="Itoh M."/>
            <person name="Kato T."/>
            <person name="Kawaji H."/>
            <person name="Kawagashira N."/>
            <person name="Kawashima T."/>
            <person name="Kojima M."/>
            <person name="Kondo S."/>
            <person name="Konno H."/>
            <person name="Nakano K."/>
            <person name="Ninomiya N."/>
            <person name="Nishio T."/>
            <person name="Okada M."/>
            <person name="Plessy C."/>
            <person name="Shibata K."/>
            <person name="Shiraki T."/>
            <person name="Suzuki S."/>
            <person name="Tagami M."/>
            <person name="Waki K."/>
            <person name="Watahiki A."/>
            <person name="Okamura-Oho Y."/>
            <person name="Suzuki H."/>
            <person name="Kawai J."/>
            <person name="Hayashizaki Y."/>
        </authorList>
    </citation>
    <scope>NUCLEOTIDE SEQUENCE [LARGE SCALE MRNA]</scope>
    <source>
        <strain>C57BL/6J</strain>
        <strain>NOD</strain>
        <tissue>Lung</tissue>
    </source>
</reference>
<reference key="2">
    <citation type="journal article" date="2004" name="Genome Res.">
        <title>The status, quality, and expansion of the NIH full-length cDNA project: the Mammalian Gene Collection (MGC).</title>
        <authorList>
            <consortium name="The MGC Project Team"/>
        </authorList>
    </citation>
    <scope>NUCLEOTIDE SEQUENCE [LARGE SCALE MRNA]</scope>
    <source>
        <strain>Czech II</strain>
        <tissue>Mammary tumor</tissue>
    </source>
</reference>
<reference key="3">
    <citation type="journal article" date="2011" name="J. Biol. Chem.">
        <title>Identification of SLC38A7 (SNAT7) protein as a glutamine transporter expressed in neurons.</title>
        <authorList>
            <person name="Hagglund M.G."/>
            <person name="Sreedharan S."/>
            <person name="Nilsson V.C."/>
            <person name="Shaik J.H."/>
            <person name="Almkvist I.M."/>
            <person name="Backlin S."/>
            <person name="Wrange O."/>
            <person name="Fredriksson R."/>
        </authorList>
    </citation>
    <scope>FUNCTION</scope>
    <scope>TRANSPORTER ACTIVITY</scope>
    <scope>SUBCELLULAR LOCATION</scope>
    <scope>TISSUE SPECIFICITY</scope>
</reference>
<reference key="4">
    <citation type="journal article" date="2017" name="Proc. Natl. Acad. Sci. U.S.A.">
        <title>SNAT7 is the primary lysosomal glutamine exporter required for extracellular protein-dependent growth of cancer cells.</title>
        <authorList>
            <person name="Verdon Q."/>
            <person name="Boonen M."/>
            <person name="Ribes C."/>
            <person name="Jadot M."/>
            <person name="Gasnier B."/>
            <person name="Sagne C."/>
        </authorList>
    </citation>
    <scope>FUNCTION</scope>
    <scope>TRANSPORTER ACTIVITY</scope>
</reference>
<name>S38A7_MOUSE</name>
<proteinExistence type="evidence at protein level"/>
<gene>
    <name evidence="6" type="primary">Slc38a7</name>
    <name type="synonym">Snat7</name>
</gene>
<organism>
    <name type="scientific">Mus musculus</name>
    <name type="common">Mouse</name>
    <dbReference type="NCBI Taxonomy" id="10090"/>
    <lineage>
        <taxon>Eukaryota</taxon>
        <taxon>Metazoa</taxon>
        <taxon>Chordata</taxon>
        <taxon>Craniata</taxon>
        <taxon>Vertebrata</taxon>
        <taxon>Euteleostomi</taxon>
        <taxon>Mammalia</taxon>
        <taxon>Eutheria</taxon>
        <taxon>Euarchontoglires</taxon>
        <taxon>Glires</taxon>
        <taxon>Rodentia</taxon>
        <taxon>Myomorpha</taxon>
        <taxon>Muroidea</taxon>
        <taxon>Muridae</taxon>
        <taxon>Murinae</taxon>
        <taxon>Mus</taxon>
        <taxon>Mus</taxon>
    </lineage>
</organism>
<protein>
    <recommendedName>
        <fullName evidence="5">Sodium-coupled neutral amino acid transporter 7</fullName>
    </recommendedName>
    <alternativeName>
        <fullName>Solute carrier family 38 member 7</fullName>
    </alternativeName>
</protein>
<evidence type="ECO:0000250" key="1">
    <source>
        <dbReference type="UniProtKB" id="Q9NVC3"/>
    </source>
</evidence>
<evidence type="ECO:0000255" key="2"/>
<evidence type="ECO:0000269" key="3">
    <source>
    </source>
</evidence>
<evidence type="ECO:0000269" key="4">
    <source>
    </source>
</evidence>
<evidence type="ECO:0000305" key="5"/>
<evidence type="ECO:0000312" key="6">
    <source>
        <dbReference type="MGI" id="MGI:2679005"/>
    </source>
</evidence>
<keyword id="KW-0029">Amino-acid transport</keyword>
<keyword id="KW-0966">Cell projection</keyword>
<keyword id="KW-0406">Ion transport</keyword>
<keyword id="KW-0458">Lysosome</keyword>
<keyword id="KW-0472">Membrane</keyword>
<keyword id="KW-0597">Phosphoprotein</keyword>
<keyword id="KW-1185">Reference proteome</keyword>
<keyword id="KW-0915">Sodium</keyword>
<keyword id="KW-0739">Sodium transport</keyword>
<keyword id="KW-0812">Transmembrane</keyword>
<keyword id="KW-1133">Transmembrane helix</keyword>
<keyword id="KW-0813">Transport</keyword>